<reference key="1">
    <citation type="journal article" date="2011" name="PLoS Pathog.">
        <title>Comparative genomics yields insights into niche adaptation of plant vascular wilt pathogens.</title>
        <authorList>
            <person name="Klosterman S.J."/>
            <person name="Subbarao K.V."/>
            <person name="Kang S."/>
            <person name="Veronese P."/>
            <person name="Gold S.E."/>
            <person name="Thomma B.P.H.J."/>
            <person name="Chen Z."/>
            <person name="Henrissat B."/>
            <person name="Lee Y.-H."/>
            <person name="Park J."/>
            <person name="Garcia-Pedrajas M.D."/>
            <person name="Barbara D.J."/>
            <person name="Anchieta A."/>
            <person name="de Jonge R."/>
            <person name="Santhanam P."/>
            <person name="Maruthachalam K."/>
            <person name="Atallah Z."/>
            <person name="Amyotte S.G."/>
            <person name="Paz Z."/>
            <person name="Inderbitzin P."/>
            <person name="Hayes R.J."/>
            <person name="Heiman D.I."/>
            <person name="Young S."/>
            <person name="Zeng Q."/>
            <person name="Engels R."/>
            <person name="Galagan J."/>
            <person name="Cuomo C.A."/>
            <person name="Dobinson K.F."/>
            <person name="Ma L.-J."/>
        </authorList>
    </citation>
    <scope>NUCLEOTIDE SEQUENCE [LARGE SCALE GENOMIC DNA]</scope>
    <source>
        <strain>VaMs.102 / ATCC MYA-4576 / FGSC 10136</strain>
    </source>
</reference>
<organism>
    <name type="scientific">Verticillium alfalfae (strain VaMs.102 / ATCC MYA-4576 / FGSC 10136)</name>
    <name type="common">Verticillium wilt of alfalfa</name>
    <name type="synonym">Verticillium albo-atrum</name>
    <dbReference type="NCBI Taxonomy" id="526221"/>
    <lineage>
        <taxon>Eukaryota</taxon>
        <taxon>Fungi</taxon>
        <taxon>Dikarya</taxon>
        <taxon>Ascomycota</taxon>
        <taxon>Pezizomycotina</taxon>
        <taxon>Sordariomycetes</taxon>
        <taxon>Hypocreomycetidae</taxon>
        <taxon>Glomerellales</taxon>
        <taxon>Plectosphaerellaceae</taxon>
        <taxon>Verticillium</taxon>
    </lineage>
</organism>
<evidence type="ECO:0000255" key="1">
    <source>
        <dbReference type="HAMAP-Rule" id="MF_03142"/>
    </source>
</evidence>
<evidence type="ECO:0000255" key="2">
    <source>
        <dbReference type="PROSITE-ProRule" id="PRU01239"/>
    </source>
</evidence>
<evidence type="ECO:0000305" key="3"/>
<proteinExistence type="inferred from homology"/>
<sequence>MSFPLHPSLVNGITKGNPSFQGGVLKCKCSTSPVTVTLRSNVAHNHACGCSKCWKPEGALFSIVSVVPVDKLEVTANGDKLAVVDPSATILRHACTGCGVHLYGRIEKDHAFKGLDFVHTELSDEKGWQEPQFAGFVTSIIEQGFDARHIDDVRAQFESLGLESYDALNPPLMNAIAAFTAANEAKA</sequence>
<protein>
    <recommendedName>
        <fullName evidence="1">Putative glutathione-dependent formaldehyde-activating enzyme</fullName>
        <ecNumber evidence="1">4.4.1.22</ecNumber>
    </recommendedName>
    <alternativeName>
        <fullName evidence="1">S-(hydroxymethyl)glutathione synthase</fullName>
    </alternativeName>
</protein>
<gene>
    <name type="ORF">VDBG_01395</name>
</gene>
<comment type="function">
    <text evidence="1">Catalyzes the condensation of formaldehyde and glutathione to S-hydroxymethylglutathione.</text>
</comment>
<comment type="catalytic activity">
    <reaction evidence="1">
        <text>S-(hydroxymethyl)glutathione = glutathione + formaldehyde</text>
        <dbReference type="Rhea" id="RHEA:22488"/>
        <dbReference type="ChEBI" id="CHEBI:16842"/>
        <dbReference type="ChEBI" id="CHEBI:57925"/>
        <dbReference type="ChEBI" id="CHEBI:58758"/>
        <dbReference type="EC" id="4.4.1.22"/>
    </reaction>
</comment>
<comment type="cofactor">
    <cofactor evidence="1 2">
        <name>Zn(2+)</name>
        <dbReference type="ChEBI" id="CHEBI:29105"/>
    </cofactor>
    <text evidence="1 2">Binds 2 Zn(2+) ions per subunit.</text>
</comment>
<comment type="pathway">
    <text evidence="1">One-carbon metabolism; formaldehyde degradation; formate from formaldehyde (glutathione route): step 1/3.</text>
</comment>
<comment type="similarity">
    <text evidence="3">Belongs to the Gfa family.</text>
</comment>
<keyword id="KW-0456">Lyase</keyword>
<keyword id="KW-0479">Metal-binding</keyword>
<keyword id="KW-1185">Reference proteome</keyword>
<keyword id="KW-0862">Zinc</keyword>
<name>GFA_VERA1</name>
<accession>C9S7Z6</accession>
<dbReference type="EC" id="4.4.1.22" evidence="1"/>
<dbReference type="EMBL" id="DS985214">
    <property type="protein sequence ID" value="EEY15286.1"/>
    <property type="molecule type" value="Genomic_DNA"/>
</dbReference>
<dbReference type="RefSeq" id="XP_003009712.1">
    <property type="nucleotide sequence ID" value="XM_003009666.1"/>
</dbReference>
<dbReference type="SMR" id="C9S7Z6"/>
<dbReference type="STRING" id="526221.C9S7Z6"/>
<dbReference type="GeneID" id="9536407"/>
<dbReference type="KEGG" id="val:VDBG_01395"/>
<dbReference type="eggNOG" id="ENOG502SKH9">
    <property type="taxonomic scope" value="Eukaryota"/>
</dbReference>
<dbReference type="HOGENOM" id="CLU_090716_0_0_1"/>
<dbReference type="OMA" id="ECGTHMY"/>
<dbReference type="OrthoDB" id="3446116at2759"/>
<dbReference type="UniPathway" id="UPA00562">
    <property type="reaction ID" value="UER00621"/>
</dbReference>
<dbReference type="Proteomes" id="UP000008698">
    <property type="component" value="Unassembled WGS sequence"/>
</dbReference>
<dbReference type="GO" id="GO:0051907">
    <property type="term" value="F:S-(hydroxymethyl)glutathione synthase activity"/>
    <property type="evidence" value="ECO:0007669"/>
    <property type="project" value="UniProtKB-UniRule"/>
</dbReference>
<dbReference type="GO" id="GO:0008270">
    <property type="term" value="F:zinc ion binding"/>
    <property type="evidence" value="ECO:0007669"/>
    <property type="project" value="UniProtKB-UniRule"/>
</dbReference>
<dbReference type="GO" id="GO:0046294">
    <property type="term" value="P:formaldehyde catabolic process"/>
    <property type="evidence" value="ECO:0007669"/>
    <property type="project" value="UniProtKB-UniRule"/>
</dbReference>
<dbReference type="Gene3D" id="3.90.1590.10">
    <property type="entry name" value="glutathione-dependent formaldehyde- activating enzyme (gfa)"/>
    <property type="match status" value="1"/>
</dbReference>
<dbReference type="HAMAP" id="MF_00723">
    <property type="entry name" value="Formald_GSH"/>
    <property type="match status" value="1"/>
</dbReference>
<dbReference type="InterPro" id="IPR006913">
    <property type="entry name" value="CENP-V/GFA"/>
</dbReference>
<dbReference type="InterPro" id="IPR014185">
    <property type="entry name" value="Formald_GSH"/>
</dbReference>
<dbReference type="InterPro" id="IPR011057">
    <property type="entry name" value="Mss4-like_sf"/>
</dbReference>
<dbReference type="NCBIfam" id="TIGR02820">
    <property type="entry name" value="formald_GSH"/>
    <property type="match status" value="1"/>
</dbReference>
<dbReference type="NCBIfam" id="NF003829">
    <property type="entry name" value="PRK05417.1"/>
    <property type="match status" value="1"/>
</dbReference>
<dbReference type="PANTHER" id="PTHR33337:SF40">
    <property type="entry name" value="CENP-V_GFA DOMAIN-CONTAINING PROTEIN-RELATED"/>
    <property type="match status" value="1"/>
</dbReference>
<dbReference type="PANTHER" id="PTHR33337">
    <property type="entry name" value="GFA DOMAIN-CONTAINING PROTEIN"/>
    <property type="match status" value="1"/>
</dbReference>
<dbReference type="Pfam" id="PF04828">
    <property type="entry name" value="GFA"/>
    <property type="match status" value="1"/>
</dbReference>
<dbReference type="PIRSF" id="PIRSF033318">
    <property type="entry name" value="Formald_GSH"/>
    <property type="match status" value="1"/>
</dbReference>
<dbReference type="SUPFAM" id="SSF51316">
    <property type="entry name" value="Mss4-like"/>
    <property type="match status" value="1"/>
</dbReference>
<dbReference type="PROSITE" id="PS51891">
    <property type="entry name" value="CENP_V_GFA"/>
    <property type="match status" value="1"/>
</dbReference>
<feature type="chain" id="PRO_0000406167" description="Putative glutathione-dependent formaldehyde-activating enzyme">
    <location>
        <begin position="1"/>
        <end position="187"/>
    </location>
</feature>
<feature type="domain" description="CENP-V/GFA" evidence="2">
    <location>
        <begin position="20"/>
        <end position="166"/>
    </location>
</feature>
<feature type="binding site" evidence="1 2">
    <location>
        <position position="27"/>
    </location>
    <ligand>
        <name>Zn(2+)</name>
        <dbReference type="ChEBI" id="CHEBI:29105"/>
        <label>1</label>
        <note>structural</note>
    </ligand>
</feature>
<feature type="binding site" evidence="1 2">
    <location>
        <position position="29"/>
    </location>
    <ligand>
        <name>Zn(2+)</name>
        <dbReference type="ChEBI" id="CHEBI:29105"/>
        <label>1</label>
        <note>structural</note>
    </ligand>
</feature>
<feature type="binding site" evidence="1 2">
    <location>
        <position position="48"/>
    </location>
    <ligand>
        <name>Zn(2+)</name>
        <dbReference type="ChEBI" id="CHEBI:29105"/>
        <label>2</label>
        <note>catalytic</note>
    </ligand>
</feature>
<feature type="binding site" evidence="1 2">
    <location>
        <position position="50"/>
    </location>
    <ligand>
        <name>Zn(2+)</name>
        <dbReference type="ChEBI" id="CHEBI:29105"/>
        <label>2</label>
        <note>catalytic</note>
    </ligand>
</feature>
<feature type="binding site" evidence="1 2">
    <location>
        <position position="53"/>
    </location>
    <ligand>
        <name>Zn(2+)</name>
        <dbReference type="ChEBI" id="CHEBI:29105"/>
        <label>2</label>
        <note>catalytic</note>
    </ligand>
</feature>
<feature type="binding site" evidence="1 2">
    <location>
        <position position="95"/>
    </location>
    <ligand>
        <name>Zn(2+)</name>
        <dbReference type="ChEBI" id="CHEBI:29105"/>
        <label>1</label>
        <note>structural</note>
    </ligand>
</feature>
<feature type="binding site" evidence="1 2">
    <location>
        <position position="98"/>
    </location>
    <ligand>
        <name>Zn(2+)</name>
        <dbReference type="ChEBI" id="CHEBI:29105"/>
        <label>1</label>
        <note>structural</note>
    </ligand>
</feature>